<accession>Q7A4S6</accession>
<reference key="1">
    <citation type="journal article" date="2001" name="Lancet">
        <title>Whole genome sequencing of meticillin-resistant Staphylococcus aureus.</title>
        <authorList>
            <person name="Kuroda M."/>
            <person name="Ohta T."/>
            <person name="Uchiyama I."/>
            <person name="Baba T."/>
            <person name="Yuzawa H."/>
            <person name="Kobayashi I."/>
            <person name="Cui L."/>
            <person name="Oguchi A."/>
            <person name="Aoki K."/>
            <person name="Nagai Y."/>
            <person name="Lian J.-Q."/>
            <person name="Ito T."/>
            <person name="Kanamori M."/>
            <person name="Matsumaru H."/>
            <person name="Maruyama A."/>
            <person name="Murakami H."/>
            <person name="Hosoyama A."/>
            <person name="Mizutani-Ui Y."/>
            <person name="Takahashi N.K."/>
            <person name="Sawano T."/>
            <person name="Inoue R."/>
            <person name="Kaito C."/>
            <person name="Sekimizu K."/>
            <person name="Hirakawa H."/>
            <person name="Kuhara S."/>
            <person name="Goto S."/>
            <person name="Yabuzaki J."/>
            <person name="Kanehisa M."/>
            <person name="Yamashita A."/>
            <person name="Oshima K."/>
            <person name="Furuya K."/>
            <person name="Yoshino C."/>
            <person name="Shiba T."/>
            <person name="Hattori M."/>
            <person name="Ogasawara N."/>
            <person name="Hayashi H."/>
            <person name="Hiramatsu K."/>
        </authorList>
    </citation>
    <scope>NUCLEOTIDE SEQUENCE [LARGE SCALE GENOMIC DNA]</scope>
    <source>
        <strain>N315</strain>
    </source>
</reference>
<reference key="2">
    <citation type="journal article" date="2003" name="Mol. Microbiol.">
        <title>Two-component system VraSR positively modulates the regulation of cell-wall biosynthesis pathway in Staphylococcus aureus.</title>
        <authorList>
            <person name="Kuroda M."/>
            <person name="Kuroda H."/>
            <person name="Oshima T."/>
            <person name="Takeuchi F."/>
            <person name="Mori H."/>
            <person name="Hiramatsu K."/>
        </authorList>
    </citation>
    <scope>REGULATION BY VARSR</scope>
</reference>
<reference key="3">
    <citation type="submission" date="2007-10" db="UniProtKB">
        <title>Shotgun proteomic analysis of total and membrane protein extracts of S. aureus strain N315.</title>
        <authorList>
            <person name="Vaezzadeh A.R."/>
            <person name="Deshusses J."/>
            <person name="Lescuyer P."/>
            <person name="Hochstrasser D.F."/>
        </authorList>
    </citation>
    <scope>IDENTIFICATION BY MASS SPECTROMETRY [LARGE SCALE ANALYSIS]</scope>
    <source>
        <strain>N315</strain>
    </source>
</reference>
<proteinExistence type="evidence at protein level"/>
<comment type="function">
    <text evidence="1">Peptidoglycan polymerase that catalyzes glycan chain elongation using lipid-linked disaccharide-pentapeptide as the substrate.</text>
</comment>
<comment type="catalytic activity">
    <reaction evidence="1">
        <text>[GlcNAc-(1-&gt;4)-Mur2Ac(oyl-L-Ala-gamma-D-Glu-L-Lys-D-Ala-D-Ala)](n)-di-trans,octa-cis-undecaprenyl diphosphate + beta-D-GlcNAc-(1-&gt;4)-Mur2Ac(oyl-L-Ala-gamma-D-Glu-L-Lys-D-Ala-D-Ala)-di-trans,octa-cis-undecaprenyl diphosphate = [GlcNAc-(1-&gt;4)-Mur2Ac(oyl-L-Ala-gamma-D-Glu-L-Lys-D-Ala-D-Ala)](n+1)-di-trans,octa-cis-undecaprenyl diphosphate + di-trans,octa-cis-undecaprenyl diphosphate + H(+)</text>
        <dbReference type="Rhea" id="RHEA:23708"/>
        <dbReference type="Rhea" id="RHEA-COMP:9602"/>
        <dbReference type="Rhea" id="RHEA-COMP:9603"/>
        <dbReference type="ChEBI" id="CHEBI:15378"/>
        <dbReference type="ChEBI" id="CHEBI:58405"/>
        <dbReference type="ChEBI" id="CHEBI:60033"/>
        <dbReference type="ChEBI" id="CHEBI:78435"/>
        <dbReference type="EC" id="2.4.99.28"/>
    </reaction>
</comment>
<comment type="pathway">
    <text evidence="1">Cell wall biogenesis; peptidoglycan biosynthesis.</text>
</comment>
<comment type="subcellular location">
    <subcellularLocation>
        <location evidence="1">Cell membrane</location>
        <topology evidence="1">Single-pass membrane protein</topology>
    </subcellularLocation>
</comment>
<comment type="induction">
    <text>Activated by the VraSR two-component system.</text>
</comment>
<comment type="similarity">
    <text evidence="1">Belongs to the glycosyltransferase 51 family.</text>
</comment>
<dbReference type="EC" id="2.4.99.28" evidence="1"/>
<dbReference type="EMBL" id="BA000018">
    <property type="protein sequence ID" value="BAB42960.1"/>
    <property type="molecule type" value="Genomic_DNA"/>
</dbReference>
<dbReference type="PIR" id="A89975">
    <property type="entry name" value="A89975"/>
</dbReference>
<dbReference type="SMR" id="Q7A4S6"/>
<dbReference type="CAZy" id="GT51">
    <property type="family name" value="Glycosyltransferase Family 51"/>
</dbReference>
<dbReference type="EnsemblBacteria" id="BAB42960">
    <property type="protein sequence ID" value="BAB42960"/>
    <property type="gene ID" value="BAB42960"/>
</dbReference>
<dbReference type="KEGG" id="sau:SA1691"/>
<dbReference type="HOGENOM" id="CLU_006354_1_2_9"/>
<dbReference type="UniPathway" id="UPA00219"/>
<dbReference type="GO" id="GO:0030288">
    <property type="term" value="C:outer membrane-bounded periplasmic space"/>
    <property type="evidence" value="ECO:0007669"/>
    <property type="project" value="TreeGrafter"/>
</dbReference>
<dbReference type="GO" id="GO:0005886">
    <property type="term" value="C:plasma membrane"/>
    <property type="evidence" value="ECO:0007669"/>
    <property type="project" value="UniProtKB-SubCell"/>
</dbReference>
<dbReference type="GO" id="GO:0008955">
    <property type="term" value="F:peptidoglycan glycosyltransferase activity"/>
    <property type="evidence" value="ECO:0007669"/>
    <property type="project" value="UniProtKB-UniRule"/>
</dbReference>
<dbReference type="GO" id="GO:0071555">
    <property type="term" value="P:cell wall organization"/>
    <property type="evidence" value="ECO:0007669"/>
    <property type="project" value="UniProtKB-KW"/>
</dbReference>
<dbReference type="GO" id="GO:0009252">
    <property type="term" value="P:peptidoglycan biosynthetic process"/>
    <property type="evidence" value="ECO:0007669"/>
    <property type="project" value="UniProtKB-UniRule"/>
</dbReference>
<dbReference type="GO" id="GO:0008360">
    <property type="term" value="P:regulation of cell shape"/>
    <property type="evidence" value="ECO:0007669"/>
    <property type="project" value="UniProtKB-KW"/>
</dbReference>
<dbReference type="Gene3D" id="1.10.3810.10">
    <property type="entry name" value="Biosynthetic peptidoglycan transglycosylase-like"/>
    <property type="match status" value="1"/>
</dbReference>
<dbReference type="HAMAP" id="MF_01434">
    <property type="entry name" value="MGT"/>
    <property type="match status" value="1"/>
</dbReference>
<dbReference type="InterPro" id="IPR001264">
    <property type="entry name" value="Glyco_trans_51"/>
</dbReference>
<dbReference type="InterPro" id="IPR050396">
    <property type="entry name" value="Glycosyltr_51/Transpeptidase"/>
</dbReference>
<dbReference type="InterPro" id="IPR023346">
    <property type="entry name" value="Lysozyme-like_dom_sf"/>
</dbReference>
<dbReference type="InterPro" id="IPR022978">
    <property type="entry name" value="Monofunct_glyco_trans"/>
</dbReference>
<dbReference type="InterPro" id="IPR036950">
    <property type="entry name" value="PBP_transglycosylase"/>
</dbReference>
<dbReference type="NCBIfam" id="NF010008">
    <property type="entry name" value="PRK13481.1"/>
    <property type="match status" value="1"/>
</dbReference>
<dbReference type="PANTHER" id="PTHR32282">
    <property type="entry name" value="BINDING PROTEIN TRANSPEPTIDASE, PUTATIVE-RELATED"/>
    <property type="match status" value="1"/>
</dbReference>
<dbReference type="PANTHER" id="PTHR32282:SF11">
    <property type="entry name" value="PENICILLIN-BINDING PROTEIN 1B"/>
    <property type="match status" value="1"/>
</dbReference>
<dbReference type="Pfam" id="PF00912">
    <property type="entry name" value="Transgly"/>
    <property type="match status" value="1"/>
</dbReference>
<dbReference type="SUPFAM" id="SSF53955">
    <property type="entry name" value="Lysozyme-like"/>
    <property type="match status" value="1"/>
</dbReference>
<gene>
    <name evidence="1" type="primary">mgt</name>
    <name type="ordered locus">SA1691</name>
</gene>
<evidence type="ECO:0000255" key="1">
    <source>
        <dbReference type="HAMAP-Rule" id="MF_01434"/>
    </source>
</evidence>
<keyword id="KW-1003">Cell membrane</keyword>
<keyword id="KW-0133">Cell shape</keyword>
<keyword id="KW-0961">Cell wall biogenesis/degradation</keyword>
<keyword id="KW-0328">Glycosyltransferase</keyword>
<keyword id="KW-0472">Membrane</keyword>
<keyword id="KW-0573">Peptidoglycan synthesis</keyword>
<keyword id="KW-0808">Transferase</keyword>
<keyword id="KW-0812">Transmembrane</keyword>
<keyword id="KW-1133">Transmembrane helix</keyword>
<protein>
    <recommendedName>
        <fullName evidence="1">Monofunctional glycosyltransferase</fullName>
        <shortName evidence="1">MGT</shortName>
        <ecNumber evidence="1">2.4.99.28</ecNumber>
    </recommendedName>
    <alternativeName>
        <fullName evidence="1">Peptidoglycan TGase</fullName>
    </alternativeName>
</protein>
<name>MGT_STAAN</name>
<organism>
    <name type="scientific">Staphylococcus aureus (strain N315)</name>
    <dbReference type="NCBI Taxonomy" id="158879"/>
    <lineage>
        <taxon>Bacteria</taxon>
        <taxon>Bacillati</taxon>
        <taxon>Bacillota</taxon>
        <taxon>Bacilli</taxon>
        <taxon>Bacillales</taxon>
        <taxon>Staphylococcaceae</taxon>
        <taxon>Staphylococcus</taxon>
    </lineage>
</organism>
<feature type="chain" id="PRO_0000083155" description="Monofunctional glycosyltransferase">
    <location>
        <begin position="1"/>
        <end position="269"/>
    </location>
</feature>
<feature type="transmembrane region" description="Helical" evidence="1">
    <location>
        <begin position="46"/>
        <end position="66"/>
    </location>
</feature>
<sequence length="269" mass="31460">MKRSDRYSNSNEHFEHMKHEPHYNTYYQPVGKPPKKKKSKRILLKILLTILIIIALFIGIMYFLSTRDNVDELRKIENKSSFVSADNMPEYVKGAFISMEDERFYNHHGFDLKGTTRALFSTISDRDVQGGSTITQQVVKNYFYDNDRSFTRKVKELFVAHRVEKQYNKNEILSFYLNNIYFGDNQYTLEGAANHYFGTTVNKNSTTMSHITVLQSAILASKVNAPSVYNINNMSENFTQRVSTNLEKMKQQNYINETQYQQAMSQLNR</sequence>